<feature type="chain" id="PRO_0000413688" description="Ubiquitin-associated protein 1-like">
    <location>
        <begin position="1"/>
        <end position="381"/>
    </location>
</feature>
<feature type="domain" description="UMA" evidence="1">
    <location>
        <begin position="4"/>
        <end position="50"/>
    </location>
</feature>
<feature type="region of interest" description="Disordered" evidence="2">
    <location>
        <begin position="87"/>
        <end position="141"/>
    </location>
</feature>
<feature type="region of interest" description="Disordered" evidence="2">
    <location>
        <begin position="185"/>
        <end position="228"/>
    </location>
</feature>
<feature type="compositionally biased region" description="Basic and acidic residues" evidence="2">
    <location>
        <begin position="95"/>
        <end position="104"/>
    </location>
</feature>
<feature type="compositionally biased region" description="Acidic residues" evidence="2">
    <location>
        <begin position="105"/>
        <end position="123"/>
    </location>
</feature>
<feature type="compositionally biased region" description="Low complexity" evidence="2">
    <location>
        <begin position="124"/>
        <end position="141"/>
    </location>
</feature>
<feature type="compositionally biased region" description="Pro residues" evidence="2">
    <location>
        <begin position="197"/>
        <end position="216"/>
    </location>
</feature>
<feature type="sequence conflict" description="In Ref. 2; BC052607." evidence="3" ref="2">
    <original>S</original>
    <variation>L</variation>
    <location>
        <position position="72"/>
    </location>
</feature>
<proteinExistence type="evidence at protein level"/>
<evidence type="ECO:0000255" key="1">
    <source>
        <dbReference type="PROSITE-ProRule" id="PRU00830"/>
    </source>
</evidence>
<evidence type="ECO:0000256" key="2">
    <source>
        <dbReference type="SAM" id="MobiDB-lite"/>
    </source>
</evidence>
<evidence type="ECO:0000305" key="3"/>
<dbReference type="EMBL" id="AC013553">
    <property type="status" value="NOT_ANNOTATED_CDS"/>
    <property type="molecule type" value="Genomic_DNA"/>
</dbReference>
<dbReference type="EMBL" id="BC052607">
    <property type="status" value="NOT_ANNOTATED_CDS"/>
    <property type="molecule type" value="mRNA"/>
</dbReference>
<dbReference type="CCDS" id="CCDS53948.1"/>
<dbReference type="RefSeq" id="NP_001157164.1">
    <property type="nucleotide sequence ID" value="NM_001163692.2"/>
</dbReference>
<dbReference type="SMR" id="F5GYI3"/>
<dbReference type="FunCoup" id="F5GYI3">
    <property type="interactions" value="6"/>
</dbReference>
<dbReference type="STRING" id="9606.ENSP00000454012"/>
<dbReference type="PhosphoSitePlus" id="F5GYI3"/>
<dbReference type="BioMuta" id="UBAP1L"/>
<dbReference type="MassIVE" id="F5GYI3"/>
<dbReference type="PaxDb" id="9606-ENSP00000454012"/>
<dbReference type="PeptideAtlas" id="F5GYI3"/>
<dbReference type="ProteomicsDB" id="24749"/>
<dbReference type="Antibodypedia" id="76928">
    <property type="antibodies" value="6 antibodies from 3 providers"/>
</dbReference>
<dbReference type="DNASU" id="390595"/>
<dbReference type="Ensembl" id="ENST00000559089.6">
    <property type="protein sequence ID" value="ENSP00000454012.1"/>
    <property type="gene ID" value="ENSG00000246922.10"/>
</dbReference>
<dbReference type="GeneID" id="390595"/>
<dbReference type="KEGG" id="hsa:390595"/>
<dbReference type="MANE-Select" id="ENST00000559089.6">
    <property type="protein sequence ID" value="ENSP00000454012.1"/>
    <property type="RefSeq nucleotide sequence ID" value="NM_001163692.2"/>
    <property type="RefSeq protein sequence ID" value="NP_001157164.1"/>
</dbReference>
<dbReference type="UCSC" id="uc002aok.4">
    <property type="organism name" value="human"/>
</dbReference>
<dbReference type="AGR" id="HGNC:40028"/>
<dbReference type="CTD" id="390595"/>
<dbReference type="GeneCards" id="UBAP1L"/>
<dbReference type="HGNC" id="HGNC:40028">
    <property type="gene designation" value="UBAP1L"/>
</dbReference>
<dbReference type="HPA" id="ENSG00000246922">
    <property type="expression patterns" value="Tissue enriched (retina)"/>
</dbReference>
<dbReference type="MalaCards" id="UBAP1L"/>
<dbReference type="neXtProt" id="NX_F5GYI3"/>
<dbReference type="OpenTargets" id="ENSG00000246922"/>
<dbReference type="VEuPathDB" id="HostDB:ENSG00000246922"/>
<dbReference type="eggNOG" id="ENOG502RVS1">
    <property type="taxonomic scope" value="Eukaryota"/>
</dbReference>
<dbReference type="GeneTree" id="ENSGT00390000008092"/>
<dbReference type="HOGENOM" id="CLU_058642_0_0_1"/>
<dbReference type="InParanoid" id="F5GYI3"/>
<dbReference type="OMA" id="KVLYWVE"/>
<dbReference type="OrthoDB" id="2018023at2759"/>
<dbReference type="PAN-GO" id="F5GYI3">
    <property type="GO annotations" value="3 GO annotations based on evolutionary models"/>
</dbReference>
<dbReference type="PhylomeDB" id="F5GYI3"/>
<dbReference type="PathwayCommons" id="F5GYI3"/>
<dbReference type="BioGRID-ORCS" id="390595">
    <property type="hits" value="14 hits in 1079 CRISPR screens"/>
</dbReference>
<dbReference type="ChiTaRS" id="UBAP1L">
    <property type="organism name" value="human"/>
</dbReference>
<dbReference type="GenomeRNAi" id="390595"/>
<dbReference type="Pharos" id="F5GYI3">
    <property type="development level" value="Tdark"/>
</dbReference>
<dbReference type="PRO" id="PR:F5GYI3"/>
<dbReference type="Proteomes" id="UP000005640">
    <property type="component" value="Chromosome 15"/>
</dbReference>
<dbReference type="RNAct" id="F5GYI3">
    <property type="molecule type" value="protein"/>
</dbReference>
<dbReference type="Bgee" id="ENSG00000246922">
    <property type="expression patterns" value="Expressed in right hemisphere of cerebellum and 104 other cell types or tissues"/>
</dbReference>
<dbReference type="ExpressionAtlas" id="F5GYI3">
    <property type="expression patterns" value="baseline and differential"/>
</dbReference>
<dbReference type="GO" id="GO:0000813">
    <property type="term" value="C:ESCRT I complex"/>
    <property type="evidence" value="ECO:0000318"/>
    <property type="project" value="GO_Central"/>
</dbReference>
<dbReference type="GO" id="GO:0043130">
    <property type="term" value="F:ubiquitin binding"/>
    <property type="evidence" value="ECO:0000318"/>
    <property type="project" value="GO_Central"/>
</dbReference>
<dbReference type="GO" id="GO:0043162">
    <property type="term" value="P:ubiquitin-dependent protein catabolic process via the multivesicular body sorting pathway"/>
    <property type="evidence" value="ECO:0000318"/>
    <property type="project" value="GO_Central"/>
</dbReference>
<dbReference type="CDD" id="cd14316">
    <property type="entry name" value="UBA2_UBAP1_like"/>
    <property type="match status" value="1"/>
</dbReference>
<dbReference type="FunFam" id="1.20.120.1920:FF:000002">
    <property type="entry name" value="Ubiquitin-associated protein 1-like a"/>
    <property type="match status" value="1"/>
</dbReference>
<dbReference type="Gene3D" id="1.20.120.1920">
    <property type="entry name" value="UBAP1 SOUBA domain"/>
    <property type="match status" value="1"/>
</dbReference>
<dbReference type="InterPro" id="IPR049467">
    <property type="entry name" value="UBAP-1-like_UBA2"/>
</dbReference>
<dbReference type="InterPro" id="IPR038870">
    <property type="entry name" value="UBAP1"/>
</dbReference>
<dbReference type="InterPro" id="IPR042575">
    <property type="entry name" value="UBAP1_C"/>
</dbReference>
<dbReference type="InterPro" id="IPR023340">
    <property type="entry name" value="UMA"/>
</dbReference>
<dbReference type="PANTHER" id="PTHR15960">
    <property type="entry name" value="LD44032P"/>
    <property type="match status" value="1"/>
</dbReference>
<dbReference type="PANTHER" id="PTHR15960:SF3">
    <property type="entry name" value="UBIQUITIN-ASSOCIATED PROTEIN 1-LIKE"/>
    <property type="match status" value="1"/>
</dbReference>
<dbReference type="Pfam" id="PF21267">
    <property type="entry name" value="UBAP-1_UBA2"/>
    <property type="match status" value="1"/>
</dbReference>
<dbReference type="PROSITE" id="PS51497">
    <property type="entry name" value="UMA"/>
    <property type="match status" value="1"/>
</dbReference>
<sequence>MNALDGVPFKLPKGFVIGTEPLPGPELSVPACGEVLLGSMHDFSLERTALFWVEAAGQGPSPYQCGDPGTASAPPAWLLLVSPEHGLAPAPTTIRDPEAGHQERPEEEGEDEAEASSGSEEEPAPSSLQPGSPASPGPGRRLCSLDVLRGVRLELAGARRRLSEGKLVSRPRALLHGLRGHRALSLCPSPAQSPRSASPPGPAPQHPAAPASPPRPSTAGAIPPLRSHKPTVASLSPYTCLPPLGGAPQPLNPHKSHPDTAADLLSALSQEEQDLIGPVVALGYPLRRAIIALQKTGRQSLSQFLSYLSACDRLLRQGYEEGLVDEAMEMFQFSESQAGEFLRLWEQFSDMGFQQDRIKEVLLVHGNRREQALEELVACAQ</sequence>
<protein>
    <recommendedName>
        <fullName>Ubiquitin-associated protein 1-like</fullName>
        <shortName>UBAP-1L</shortName>
    </recommendedName>
</protein>
<organism>
    <name type="scientific">Homo sapiens</name>
    <name type="common">Human</name>
    <dbReference type="NCBI Taxonomy" id="9606"/>
    <lineage>
        <taxon>Eukaryota</taxon>
        <taxon>Metazoa</taxon>
        <taxon>Chordata</taxon>
        <taxon>Craniata</taxon>
        <taxon>Vertebrata</taxon>
        <taxon>Euteleostomi</taxon>
        <taxon>Mammalia</taxon>
        <taxon>Eutheria</taxon>
        <taxon>Euarchontoglires</taxon>
        <taxon>Primates</taxon>
        <taxon>Haplorrhini</taxon>
        <taxon>Catarrhini</taxon>
        <taxon>Hominidae</taxon>
        <taxon>Homo</taxon>
    </lineage>
</organism>
<gene>
    <name type="primary">UBAP1L</name>
</gene>
<reference key="1">
    <citation type="journal article" date="2006" name="Nature">
        <title>Analysis of the DNA sequence and duplication history of human chromosome 15.</title>
        <authorList>
            <person name="Zody M.C."/>
            <person name="Garber M."/>
            <person name="Sharpe T."/>
            <person name="Young S.K."/>
            <person name="Rowen L."/>
            <person name="O'Neill K."/>
            <person name="Whittaker C.A."/>
            <person name="Kamal M."/>
            <person name="Chang J.L."/>
            <person name="Cuomo C.A."/>
            <person name="Dewar K."/>
            <person name="FitzGerald M.G."/>
            <person name="Kodira C.D."/>
            <person name="Madan A."/>
            <person name="Qin S."/>
            <person name="Yang X."/>
            <person name="Abbasi N."/>
            <person name="Abouelleil A."/>
            <person name="Arachchi H.M."/>
            <person name="Baradarani L."/>
            <person name="Birditt B."/>
            <person name="Bloom S."/>
            <person name="Bloom T."/>
            <person name="Borowsky M.L."/>
            <person name="Burke J."/>
            <person name="Butler J."/>
            <person name="Cook A."/>
            <person name="DeArellano K."/>
            <person name="DeCaprio D."/>
            <person name="Dorris L. III"/>
            <person name="Dors M."/>
            <person name="Eichler E.E."/>
            <person name="Engels R."/>
            <person name="Fahey J."/>
            <person name="Fleetwood P."/>
            <person name="Friedman C."/>
            <person name="Gearin G."/>
            <person name="Hall J.L."/>
            <person name="Hensley G."/>
            <person name="Johnson E."/>
            <person name="Jones C."/>
            <person name="Kamat A."/>
            <person name="Kaur A."/>
            <person name="Locke D.P."/>
            <person name="Madan A."/>
            <person name="Munson G."/>
            <person name="Jaffe D.B."/>
            <person name="Lui A."/>
            <person name="Macdonald P."/>
            <person name="Mauceli E."/>
            <person name="Naylor J.W."/>
            <person name="Nesbitt R."/>
            <person name="Nicol R."/>
            <person name="O'Leary S.B."/>
            <person name="Ratcliffe A."/>
            <person name="Rounsley S."/>
            <person name="She X."/>
            <person name="Sneddon K.M.B."/>
            <person name="Stewart S."/>
            <person name="Sougnez C."/>
            <person name="Stone S.M."/>
            <person name="Topham K."/>
            <person name="Vincent D."/>
            <person name="Wang S."/>
            <person name="Zimmer A.R."/>
            <person name="Birren B.W."/>
            <person name="Hood L."/>
            <person name="Lander E.S."/>
            <person name="Nusbaum C."/>
        </authorList>
    </citation>
    <scope>NUCLEOTIDE SEQUENCE [LARGE SCALE GENOMIC DNA]</scope>
</reference>
<reference key="2">
    <citation type="journal article" date="2004" name="Genome Res.">
        <title>The status, quality, and expansion of the NIH full-length cDNA project: the Mammalian Gene Collection (MGC).</title>
        <authorList>
            <consortium name="The MGC Project Team"/>
        </authorList>
    </citation>
    <scope>NUCLEOTIDE SEQUENCE [LARGE SCALE MRNA]</scope>
    <source>
        <tissue>Melanoma</tissue>
    </source>
</reference>
<name>UBA1L_HUMAN</name>
<accession>F5GYI3</accession>
<keyword id="KW-1267">Proteomics identification</keyword>
<keyword id="KW-1185">Reference proteome</keyword>